<protein>
    <recommendedName>
        <fullName evidence="1">Undecaprenyl-diphosphatase</fullName>
        <ecNumber evidence="1">3.6.1.27</ecNumber>
    </recommendedName>
    <alternativeName>
        <fullName evidence="1">Bacitracin resistance protein</fullName>
    </alternativeName>
    <alternativeName>
        <fullName evidence="1">Undecaprenyl pyrophosphate phosphatase</fullName>
    </alternativeName>
</protein>
<keyword id="KW-0046">Antibiotic resistance</keyword>
<keyword id="KW-0997">Cell inner membrane</keyword>
<keyword id="KW-1003">Cell membrane</keyword>
<keyword id="KW-0133">Cell shape</keyword>
<keyword id="KW-0961">Cell wall biogenesis/degradation</keyword>
<keyword id="KW-0378">Hydrolase</keyword>
<keyword id="KW-0472">Membrane</keyword>
<keyword id="KW-0573">Peptidoglycan synthesis</keyword>
<keyword id="KW-0812">Transmembrane</keyword>
<keyword id="KW-1133">Transmembrane helix</keyword>
<evidence type="ECO:0000255" key="1">
    <source>
        <dbReference type="HAMAP-Rule" id="MF_01006"/>
    </source>
</evidence>
<sequence>MTESYALFVAFVLGIVEGLTEFLPVSSTGHMIIVGHLLGFEGPKAATFEVVIQMGSILAVVAVFWRRLFGLIGIHFGQKPPQDHATLSLVHIILGMLPAVIIGLGIHSWIKANLFGPETVMYALVAGGILLIIAEKFRPTVRSETLDDISYKQAFGIGLFQCLALWPGFSRSGATISGGMLMGISRQAAAEFSFILAVPMMVAASGLDLYKSRDLLSMADFPMFAVGFITAFVVAMIAIKTFLALIRRLDFIPFAIYRFIVAFAVYLVFVA</sequence>
<comment type="function">
    <text evidence="1">Catalyzes the dephosphorylation of undecaprenyl diphosphate (UPP). Confers resistance to bacitracin.</text>
</comment>
<comment type="catalytic activity">
    <reaction evidence="1">
        <text>di-trans,octa-cis-undecaprenyl diphosphate + H2O = di-trans,octa-cis-undecaprenyl phosphate + phosphate + H(+)</text>
        <dbReference type="Rhea" id="RHEA:28094"/>
        <dbReference type="ChEBI" id="CHEBI:15377"/>
        <dbReference type="ChEBI" id="CHEBI:15378"/>
        <dbReference type="ChEBI" id="CHEBI:43474"/>
        <dbReference type="ChEBI" id="CHEBI:58405"/>
        <dbReference type="ChEBI" id="CHEBI:60392"/>
        <dbReference type="EC" id="3.6.1.27"/>
    </reaction>
</comment>
<comment type="subcellular location">
    <subcellularLocation>
        <location evidence="1">Cell inner membrane</location>
        <topology evidence="1">Multi-pass membrane protein</topology>
    </subcellularLocation>
</comment>
<comment type="miscellaneous">
    <text>Bacitracin is thought to be involved in the inhibition of peptidoglycan synthesis by sequestering undecaprenyl diphosphate, thereby reducing the pool of lipid carrier available.</text>
</comment>
<comment type="similarity">
    <text evidence="1">Belongs to the UppP family.</text>
</comment>
<proteinExistence type="inferred from homology"/>
<dbReference type="EC" id="3.6.1.27" evidence="1"/>
<dbReference type="EMBL" id="CP000644">
    <property type="protein sequence ID" value="ABO88400.1"/>
    <property type="molecule type" value="Genomic_DNA"/>
</dbReference>
<dbReference type="RefSeq" id="WP_005318402.1">
    <property type="nucleotide sequence ID" value="NC_009348.1"/>
</dbReference>
<dbReference type="SMR" id="A4SHM8"/>
<dbReference type="STRING" id="29491.GCA_000820065_01279"/>
<dbReference type="KEGG" id="asa:ASA_0206"/>
<dbReference type="eggNOG" id="COG1968">
    <property type="taxonomic scope" value="Bacteria"/>
</dbReference>
<dbReference type="HOGENOM" id="CLU_060296_2_0_6"/>
<dbReference type="Proteomes" id="UP000000225">
    <property type="component" value="Chromosome"/>
</dbReference>
<dbReference type="GO" id="GO:0005886">
    <property type="term" value="C:plasma membrane"/>
    <property type="evidence" value="ECO:0007669"/>
    <property type="project" value="UniProtKB-SubCell"/>
</dbReference>
<dbReference type="GO" id="GO:0050380">
    <property type="term" value="F:undecaprenyl-diphosphatase activity"/>
    <property type="evidence" value="ECO:0007669"/>
    <property type="project" value="UniProtKB-UniRule"/>
</dbReference>
<dbReference type="GO" id="GO:0071555">
    <property type="term" value="P:cell wall organization"/>
    <property type="evidence" value="ECO:0007669"/>
    <property type="project" value="UniProtKB-KW"/>
</dbReference>
<dbReference type="GO" id="GO:0009252">
    <property type="term" value="P:peptidoglycan biosynthetic process"/>
    <property type="evidence" value="ECO:0007669"/>
    <property type="project" value="UniProtKB-KW"/>
</dbReference>
<dbReference type="GO" id="GO:0008360">
    <property type="term" value="P:regulation of cell shape"/>
    <property type="evidence" value="ECO:0007669"/>
    <property type="project" value="UniProtKB-KW"/>
</dbReference>
<dbReference type="GO" id="GO:0046677">
    <property type="term" value="P:response to antibiotic"/>
    <property type="evidence" value="ECO:0007669"/>
    <property type="project" value="UniProtKB-UniRule"/>
</dbReference>
<dbReference type="HAMAP" id="MF_01006">
    <property type="entry name" value="Undec_diphosphatase"/>
    <property type="match status" value="1"/>
</dbReference>
<dbReference type="InterPro" id="IPR003824">
    <property type="entry name" value="UppP"/>
</dbReference>
<dbReference type="NCBIfam" id="NF001388">
    <property type="entry name" value="PRK00281.1-1"/>
    <property type="match status" value="1"/>
</dbReference>
<dbReference type="NCBIfam" id="NF001389">
    <property type="entry name" value="PRK00281.1-2"/>
    <property type="match status" value="1"/>
</dbReference>
<dbReference type="NCBIfam" id="NF001390">
    <property type="entry name" value="PRK00281.1-4"/>
    <property type="match status" value="1"/>
</dbReference>
<dbReference type="NCBIfam" id="TIGR00753">
    <property type="entry name" value="undec_PP_bacA"/>
    <property type="match status" value="1"/>
</dbReference>
<dbReference type="PANTHER" id="PTHR30622">
    <property type="entry name" value="UNDECAPRENYL-DIPHOSPHATASE"/>
    <property type="match status" value="1"/>
</dbReference>
<dbReference type="PANTHER" id="PTHR30622:SF3">
    <property type="entry name" value="UNDECAPRENYL-DIPHOSPHATASE"/>
    <property type="match status" value="1"/>
</dbReference>
<dbReference type="Pfam" id="PF02673">
    <property type="entry name" value="BacA"/>
    <property type="match status" value="1"/>
</dbReference>
<name>UPPP_AERS4</name>
<gene>
    <name evidence="1" type="primary">uppP</name>
    <name type="synonym">bacA</name>
    <name type="ordered locus">ASA_0206</name>
</gene>
<feature type="chain" id="PRO_0000303018" description="Undecaprenyl-diphosphatase">
    <location>
        <begin position="1"/>
        <end position="271"/>
    </location>
</feature>
<feature type="transmembrane region" description="Helical" evidence="1">
    <location>
        <begin position="5"/>
        <end position="25"/>
    </location>
</feature>
<feature type="transmembrane region" description="Helical" evidence="1">
    <location>
        <begin position="45"/>
        <end position="65"/>
    </location>
</feature>
<feature type="transmembrane region" description="Helical" evidence="1">
    <location>
        <begin position="86"/>
        <end position="106"/>
    </location>
</feature>
<feature type="transmembrane region" description="Helical" evidence="1">
    <location>
        <begin position="114"/>
        <end position="134"/>
    </location>
</feature>
<feature type="transmembrane region" description="Helical" evidence="1">
    <location>
        <begin position="149"/>
        <end position="169"/>
    </location>
</feature>
<feature type="transmembrane region" description="Helical" evidence="1">
    <location>
        <begin position="189"/>
        <end position="209"/>
    </location>
</feature>
<feature type="transmembrane region" description="Helical" evidence="1">
    <location>
        <begin position="226"/>
        <end position="246"/>
    </location>
</feature>
<feature type="transmembrane region" description="Helical" evidence="1">
    <location>
        <begin position="251"/>
        <end position="271"/>
    </location>
</feature>
<organism>
    <name type="scientific">Aeromonas salmonicida (strain A449)</name>
    <dbReference type="NCBI Taxonomy" id="382245"/>
    <lineage>
        <taxon>Bacteria</taxon>
        <taxon>Pseudomonadati</taxon>
        <taxon>Pseudomonadota</taxon>
        <taxon>Gammaproteobacteria</taxon>
        <taxon>Aeromonadales</taxon>
        <taxon>Aeromonadaceae</taxon>
        <taxon>Aeromonas</taxon>
    </lineage>
</organism>
<accession>A4SHM8</accession>
<reference key="1">
    <citation type="journal article" date="2008" name="BMC Genomics">
        <title>The genome of Aeromonas salmonicida subsp. salmonicida A449: insights into the evolution of a fish pathogen.</title>
        <authorList>
            <person name="Reith M.E."/>
            <person name="Singh R.K."/>
            <person name="Curtis B."/>
            <person name="Boyd J.M."/>
            <person name="Bouevitch A."/>
            <person name="Kimball J."/>
            <person name="Munholland J."/>
            <person name="Murphy C."/>
            <person name="Sarty D."/>
            <person name="Williams J."/>
            <person name="Nash J.H."/>
            <person name="Johnson S.C."/>
            <person name="Brown L.L."/>
        </authorList>
    </citation>
    <scope>NUCLEOTIDE SEQUENCE [LARGE SCALE GENOMIC DNA]</scope>
    <source>
        <strain>A449</strain>
    </source>
</reference>